<protein>
    <recommendedName>
        <fullName evidence="1">Protein NrdI</fullName>
    </recommendedName>
</protein>
<dbReference type="EMBL" id="AM040265">
    <property type="protein sequence ID" value="CAJ13056.1"/>
    <property type="molecule type" value="Genomic_DNA"/>
</dbReference>
<dbReference type="RefSeq" id="WP_002966273.1">
    <property type="nucleotide sequence ID" value="NZ_KN046823.1"/>
</dbReference>
<dbReference type="SMR" id="Q2YJZ2"/>
<dbReference type="STRING" id="359391.BAB2_0890"/>
<dbReference type="GeneID" id="97535519"/>
<dbReference type="KEGG" id="bmf:BAB2_0890"/>
<dbReference type="PATRIC" id="fig|359391.11.peg.573"/>
<dbReference type="HOGENOM" id="CLU_114845_0_0_5"/>
<dbReference type="PhylomeDB" id="Q2YJZ2"/>
<dbReference type="Proteomes" id="UP000002719">
    <property type="component" value="Chromosome II"/>
</dbReference>
<dbReference type="GO" id="GO:0010181">
    <property type="term" value="F:FMN binding"/>
    <property type="evidence" value="ECO:0007669"/>
    <property type="project" value="InterPro"/>
</dbReference>
<dbReference type="GO" id="GO:0036211">
    <property type="term" value="P:protein modification process"/>
    <property type="evidence" value="ECO:0007669"/>
    <property type="project" value="InterPro"/>
</dbReference>
<dbReference type="Gene3D" id="3.40.50.360">
    <property type="match status" value="1"/>
</dbReference>
<dbReference type="HAMAP" id="MF_00128">
    <property type="entry name" value="NrdI"/>
    <property type="match status" value="1"/>
</dbReference>
<dbReference type="InterPro" id="IPR029039">
    <property type="entry name" value="Flavoprotein-like_sf"/>
</dbReference>
<dbReference type="InterPro" id="IPR020852">
    <property type="entry name" value="RNR_Ib_NrdI_bac"/>
</dbReference>
<dbReference type="InterPro" id="IPR004465">
    <property type="entry name" value="RNR_NrdI"/>
</dbReference>
<dbReference type="NCBIfam" id="TIGR00333">
    <property type="entry name" value="nrdI"/>
    <property type="match status" value="1"/>
</dbReference>
<dbReference type="PANTHER" id="PTHR37297">
    <property type="entry name" value="PROTEIN NRDI"/>
    <property type="match status" value="1"/>
</dbReference>
<dbReference type="PANTHER" id="PTHR37297:SF1">
    <property type="entry name" value="PROTEIN NRDI"/>
    <property type="match status" value="1"/>
</dbReference>
<dbReference type="Pfam" id="PF07972">
    <property type="entry name" value="Flavodoxin_NdrI"/>
    <property type="match status" value="1"/>
</dbReference>
<dbReference type="PIRSF" id="PIRSF005087">
    <property type="entry name" value="NrdI"/>
    <property type="match status" value="1"/>
</dbReference>
<dbReference type="SUPFAM" id="SSF52218">
    <property type="entry name" value="Flavoproteins"/>
    <property type="match status" value="1"/>
</dbReference>
<keyword id="KW-1185">Reference proteome</keyword>
<feature type="chain" id="PRO_1000016494" description="Protein NrdI">
    <location>
        <begin position="1"/>
        <end position="135"/>
    </location>
</feature>
<sequence>MSLIVYFSSRSGNTHRFVERLGVRSSRIPLEASGALQVREPFVLVTPTYGGGSTKGAVPNPVIRFLNDADNRALIRGVIAAGNSNFGEAFCIAGNIISAKCGVPYLYRFELLGTAEDVGNVRNGMEQFWTRQTQA</sequence>
<proteinExistence type="inferred from homology"/>
<gene>
    <name evidence="1" type="primary">nrdI</name>
    <name type="ordered locus">BAB2_0890</name>
</gene>
<accession>Q2YJZ2</accession>
<comment type="function">
    <text evidence="1">Probably involved in ribonucleotide reductase function.</text>
</comment>
<comment type="similarity">
    <text evidence="1">Belongs to the NrdI family.</text>
</comment>
<evidence type="ECO:0000255" key="1">
    <source>
        <dbReference type="HAMAP-Rule" id="MF_00128"/>
    </source>
</evidence>
<reference key="1">
    <citation type="journal article" date="2005" name="Infect. Immun.">
        <title>Whole-genome analyses of speciation events in pathogenic Brucellae.</title>
        <authorList>
            <person name="Chain P.S."/>
            <person name="Comerci D.J."/>
            <person name="Tolmasky M.E."/>
            <person name="Larimer F.W."/>
            <person name="Malfatti S.A."/>
            <person name="Vergez L.M."/>
            <person name="Aguero F."/>
            <person name="Land M.L."/>
            <person name="Ugalde R.A."/>
            <person name="Garcia E."/>
        </authorList>
    </citation>
    <scope>NUCLEOTIDE SEQUENCE [LARGE SCALE GENOMIC DNA]</scope>
    <source>
        <strain>2308</strain>
    </source>
</reference>
<name>NRDI_BRUA2</name>
<organism>
    <name type="scientific">Brucella abortus (strain 2308)</name>
    <dbReference type="NCBI Taxonomy" id="359391"/>
    <lineage>
        <taxon>Bacteria</taxon>
        <taxon>Pseudomonadati</taxon>
        <taxon>Pseudomonadota</taxon>
        <taxon>Alphaproteobacteria</taxon>
        <taxon>Hyphomicrobiales</taxon>
        <taxon>Brucellaceae</taxon>
        <taxon>Brucella/Ochrobactrum group</taxon>
        <taxon>Brucella</taxon>
    </lineage>
</organism>